<organism>
    <name type="scientific">Salmonella arizonae (strain ATCC BAA-731 / CDC346-86 / RSK2980)</name>
    <dbReference type="NCBI Taxonomy" id="41514"/>
    <lineage>
        <taxon>Bacteria</taxon>
        <taxon>Pseudomonadati</taxon>
        <taxon>Pseudomonadota</taxon>
        <taxon>Gammaproteobacteria</taxon>
        <taxon>Enterobacterales</taxon>
        <taxon>Enterobacteriaceae</taxon>
        <taxon>Salmonella</taxon>
    </lineage>
</organism>
<protein>
    <recommendedName>
        <fullName evidence="1">Galactokinase</fullName>
        <ecNumber evidence="1">2.7.1.6</ecNumber>
    </recommendedName>
    <alternativeName>
        <fullName evidence="1">Galactose kinase</fullName>
    </alternativeName>
</protein>
<gene>
    <name evidence="1" type="primary">galK</name>
    <name type="ordered locus">SARI_02168</name>
</gene>
<feature type="chain" id="PRO_1000078408" description="Galactokinase">
    <location>
        <begin position="1"/>
        <end position="382"/>
    </location>
</feature>
<feature type="active site" description="Proton acceptor" evidence="1">
    <location>
        <position position="174"/>
    </location>
</feature>
<feature type="binding site" evidence="1">
    <location>
        <begin position="34"/>
        <end position="37"/>
    </location>
    <ligand>
        <name>substrate</name>
    </ligand>
</feature>
<feature type="binding site" evidence="1">
    <location>
        <begin position="124"/>
        <end position="130"/>
    </location>
    <ligand>
        <name>ATP</name>
        <dbReference type="ChEBI" id="CHEBI:30616"/>
    </ligand>
</feature>
<feature type="binding site" evidence="1">
    <location>
        <position position="130"/>
    </location>
    <ligand>
        <name>Mg(2+)</name>
        <dbReference type="ChEBI" id="CHEBI:18420"/>
    </ligand>
</feature>
<feature type="binding site" evidence="1">
    <location>
        <position position="162"/>
    </location>
    <ligand>
        <name>Mg(2+)</name>
        <dbReference type="ChEBI" id="CHEBI:18420"/>
    </ligand>
</feature>
<feature type="binding site" evidence="1">
    <location>
        <position position="223"/>
    </location>
    <ligand>
        <name>substrate</name>
    </ligand>
</feature>
<feature type="site" description="Transition state stabilizer" evidence="1">
    <location>
        <position position="28"/>
    </location>
</feature>
<sequence>MNLKEKTRALFAEVFGYPATHTIQAPGRVNLIGEHTDYNDGFVLPCAIDYQTVISCAPRDDRTVRVIAADYDNQVDEFSLDAPIVTHDSQQWSNYVRGVVKHLQQRNNAFGGVDMVISGNVPQGAGLSSSASLEVAVGTVFQQLYHLPLDGAQIALNGQEAENQFVGCNCGIMDQLISALGKKDHALLIDCRSLGTKAVSMPKGVAVVIINSNFKRTLVGSEYNTRREQCETGARFFQQPALRDVSLEAFNAVACELDPVVAKRVRHVLSENARTVEAASALEKGDLQRMGQLMAESHASMRDDFEITVPQIDTLVEIVKATIGDKGGVRMTGGGFGGCIVALIPEDLVPAVQQAVAQQYEAKTGIKETFYVCKPSQGAGQC</sequence>
<name>GAL1_SALAR</name>
<dbReference type="EC" id="2.7.1.6" evidence="1"/>
<dbReference type="EMBL" id="CP000880">
    <property type="protein sequence ID" value="ABX22045.1"/>
    <property type="molecule type" value="Genomic_DNA"/>
</dbReference>
<dbReference type="SMR" id="A9MJI2"/>
<dbReference type="STRING" id="41514.SARI_02168"/>
<dbReference type="KEGG" id="ses:SARI_02168"/>
<dbReference type="HOGENOM" id="CLU_017814_2_1_6"/>
<dbReference type="UniPathway" id="UPA00214"/>
<dbReference type="Proteomes" id="UP000002084">
    <property type="component" value="Chromosome"/>
</dbReference>
<dbReference type="GO" id="GO:0005829">
    <property type="term" value="C:cytosol"/>
    <property type="evidence" value="ECO:0007669"/>
    <property type="project" value="TreeGrafter"/>
</dbReference>
<dbReference type="GO" id="GO:0005524">
    <property type="term" value="F:ATP binding"/>
    <property type="evidence" value="ECO:0007669"/>
    <property type="project" value="UniProtKB-UniRule"/>
</dbReference>
<dbReference type="GO" id="GO:0004335">
    <property type="term" value="F:galactokinase activity"/>
    <property type="evidence" value="ECO:0007669"/>
    <property type="project" value="UniProtKB-UniRule"/>
</dbReference>
<dbReference type="GO" id="GO:0000287">
    <property type="term" value="F:magnesium ion binding"/>
    <property type="evidence" value="ECO:0007669"/>
    <property type="project" value="UniProtKB-UniRule"/>
</dbReference>
<dbReference type="GO" id="GO:0006012">
    <property type="term" value="P:galactose metabolic process"/>
    <property type="evidence" value="ECO:0007669"/>
    <property type="project" value="UniProtKB-UniRule"/>
</dbReference>
<dbReference type="FunFam" id="3.30.230.10:FF:000017">
    <property type="entry name" value="Galactokinase"/>
    <property type="match status" value="1"/>
</dbReference>
<dbReference type="FunFam" id="3.30.70.890:FF:000001">
    <property type="entry name" value="Galactokinase"/>
    <property type="match status" value="1"/>
</dbReference>
<dbReference type="Gene3D" id="3.30.230.10">
    <property type="match status" value="1"/>
</dbReference>
<dbReference type="Gene3D" id="3.30.70.890">
    <property type="entry name" value="GHMP kinase, C-terminal domain"/>
    <property type="match status" value="1"/>
</dbReference>
<dbReference type="HAMAP" id="MF_00246">
    <property type="entry name" value="Galactokinase"/>
    <property type="match status" value="1"/>
</dbReference>
<dbReference type="InterPro" id="IPR000705">
    <property type="entry name" value="Galactokinase"/>
</dbReference>
<dbReference type="InterPro" id="IPR022963">
    <property type="entry name" value="Galactokinase_bac"/>
</dbReference>
<dbReference type="InterPro" id="IPR019741">
    <property type="entry name" value="Galactokinase_CS"/>
</dbReference>
<dbReference type="InterPro" id="IPR019539">
    <property type="entry name" value="GalKase_N"/>
</dbReference>
<dbReference type="InterPro" id="IPR013750">
    <property type="entry name" value="GHMP_kinase_C_dom"/>
</dbReference>
<dbReference type="InterPro" id="IPR036554">
    <property type="entry name" value="GHMP_kinase_C_sf"/>
</dbReference>
<dbReference type="InterPro" id="IPR006204">
    <property type="entry name" value="GHMP_kinase_N_dom"/>
</dbReference>
<dbReference type="InterPro" id="IPR006203">
    <property type="entry name" value="GHMP_knse_ATP-bd_CS"/>
</dbReference>
<dbReference type="InterPro" id="IPR006206">
    <property type="entry name" value="Mevalonate/galactokinase"/>
</dbReference>
<dbReference type="InterPro" id="IPR020568">
    <property type="entry name" value="Ribosomal_Su5_D2-typ_SF"/>
</dbReference>
<dbReference type="InterPro" id="IPR014721">
    <property type="entry name" value="Ribsml_uS5_D2-typ_fold_subgr"/>
</dbReference>
<dbReference type="NCBIfam" id="TIGR00131">
    <property type="entry name" value="gal_kin"/>
    <property type="match status" value="1"/>
</dbReference>
<dbReference type="NCBIfam" id="NF003472">
    <property type="entry name" value="PRK05101.1"/>
    <property type="match status" value="1"/>
</dbReference>
<dbReference type="PANTHER" id="PTHR10457:SF7">
    <property type="entry name" value="GALACTOKINASE-RELATED"/>
    <property type="match status" value="1"/>
</dbReference>
<dbReference type="PANTHER" id="PTHR10457">
    <property type="entry name" value="MEVALONATE KINASE/GALACTOKINASE"/>
    <property type="match status" value="1"/>
</dbReference>
<dbReference type="Pfam" id="PF10509">
    <property type="entry name" value="GalKase_gal_bdg"/>
    <property type="match status" value="1"/>
</dbReference>
<dbReference type="Pfam" id="PF08544">
    <property type="entry name" value="GHMP_kinases_C"/>
    <property type="match status" value="1"/>
</dbReference>
<dbReference type="Pfam" id="PF00288">
    <property type="entry name" value="GHMP_kinases_N"/>
    <property type="match status" value="1"/>
</dbReference>
<dbReference type="PIRSF" id="PIRSF000530">
    <property type="entry name" value="Galactokinase"/>
    <property type="match status" value="1"/>
</dbReference>
<dbReference type="PRINTS" id="PR00473">
    <property type="entry name" value="GALCTOKINASE"/>
</dbReference>
<dbReference type="PRINTS" id="PR00959">
    <property type="entry name" value="MEVGALKINASE"/>
</dbReference>
<dbReference type="SUPFAM" id="SSF55060">
    <property type="entry name" value="GHMP Kinase, C-terminal domain"/>
    <property type="match status" value="1"/>
</dbReference>
<dbReference type="SUPFAM" id="SSF54211">
    <property type="entry name" value="Ribosomal protein S5 domain 2-like"/>
    <property type="match status" value="1"/>
</dbReference>
<dbReference type="PROSITE" id="PS00106">
    <property type="entry name" value="GALACTOKINASE"/>
    <property type="match status" value="1"/>
</dbReference>
<dbReference type="PROSITE" id="PS00627">
    <property type="entry name" value="GHMP_KINASES_ATP"/>
    <property type="match status" value="1"/>
</dbReference>
<proteinExistence type="inferred from homology"/>
<reference key="1">
    <citation type="submission" date="2007-11" db="EMBL/GenBank/DDBJ databases">
        <authorList>
            <consortium name="The Salmonella enterica serovar Arizonae Genome Sequencing Project"/>
            <person name="McClelland M."/>
            <person name="Sanderson E.K."/>
            <person name="Porwollik S."/>
            <person name="Spieth J."/>
            <person name="Clifton W.S."/>
            <person name="Fulton R."/>
            <person name="Chunyan W."/>
            <person name="Wollam A."/>
            <person name="Shah N."/>
            <person name="Pepin K."/>
            <person name="Bhonagiri V."/>
            <person name="Nash W."/>
            <person name="Johnson M."/>
            <person name="Thiruvilangam P."/>
            <person name="Wilson R."/>
        </authorList>
    </citation>
    <scope>NUCLEOTIDE SEQUENCE [LARGE SCALE GENOMIC DNA]</scope>
    <source>
        <strain>ATCC BAA-731 / CDC346-86 / RSK2980</strain>
    </source>
</reference>
<comment type="function">
    <text evidence="1">Catalyzes the transfer of the gamma-phosphate of ATP to D-galactose to form alpha-D-galactose-1-phosphate (Gal-1-P).</text>
</comment>
<comment type="catalytic activity">
    <reaction evidence="1">
        <text>alpha-D-galactose + ATP = alpha-D-galactose 1-phosphate + ADP + H(+)</text>
        <dbReference type="Rhea" id="RHEA:13553"/>
        <dbReference type="ChEBI" id="CHEBI:15378"/>
        <dbReference type="ChEBI" id="CHEBI:28061"/>
        <dbReference type="ChEBI" id="CHEBI:30616"/>
        <dbReference type="ChEBI" id="CHEBI:58336"/>
        <dbReference type="ChEBI" id="CHEBI:456216"/>
        <dbReference type="EC" id="2.7.1.6"/>
    </reaction>
</comment>
<comment type="pathway">
    <text evidence="1">Carbohydrate metabolism; galactose metabolism.</text>
</comment>
<comment type="subcellular location">
    <subcellularLocation>
        <location evidence="1">Cytoplasm</location>
    </subcellularLocation>
</comment>
<comment type="similarity">
    <text evidence="1">Belongs to the GHMP kinase family. GalK subfamily.</text>
</comment>
<evidence type="ECO:0000255" key="1">
    <source>
        <dbReference type="HAMAP-Rule" id="MF_00246"/>
    </source>
</evidence>
<accession>A9MJI2</accession>
<keyword id="KW-0067">ATP-binding</keyword>
<keyword id="KW-0119">Carbohydrate metabolism</keyword>
<keyword id="KW-0963">Cytoplasm</keyword>
<keyword id="KW-0299">Galactose metabolism</keyword>
<keyword id="KW-0418">Kinase</keyword>
<keyword id="KW-0460">Magnesium</keyword>
<keyword id="KW-0479">Metal-binding</keyword>
<keyword id="KW-0547">Nucleotide-binding</keyword>
<keyword id="KW-1185">Reference proteome</keyword>
<keyword id="KW-0808">Transferase</keyword>